<evidence type="ECO:0000250" key="1">
    <source>
        <dbReference type="UniProtKB" id="P63142"/>
    </source>
</evidence>
<evidence type="ECO:0000250" key="2">
    <source>
        <dbReference type="UniProtKB" id="Q8TAE7"/>
    </source>
</evidence>
<evidence type="ECO:0000303" key="3">
    <source ref="1"/>
</evidence>
<evidence type="ECO:0000305" key="4"/>
<evidence type="ECO:0000305" key="5">
    <source ref="1"/>
</evidence>
<evidence type="ECO:0000312" key="6">
    <source>
        <dbReference type="MGI" id="MGI:2663923"/>
    </source>
</evidence>
<feature type="chain" id="PRO_0000054078" description="Voltage-gated potassium channel regulatory subunit KCNG3">
    <location>
        <begin position="1"/>
        <end position="433"/>
    </location>
</feature>
<feature type="topological domain" description="Cytoplasmic" evidence="1">
    <location>
        <begin position="1"/>
        <end position="165"/>
    </location>
</feature>
<feature type="transmembrane region" description="Helical; Name=Segment S1" evidence="1">
    <location>
        <begin position="166"/>
        <end position="187"/>
    </location>
</feature>
<feature type="topological domain" description="Extracellular" evidence="1">
    <location>
        <begin position="188"/>
        <end position="217"/>
    </location>
</feature>
<feature type="transmembrane region" description="Helical; Name=Segment S2" evidence="1">
    <location>
        <begin position="218"/>
        <end position="239"/>
    </location>
</feature>
<feature type="topological domain" description="Cytoplasmic" evidence="1">
    <location>
        <begin position="240"/>
        <end position="250"/>
    </location>
</feature>
<feature type="transmembrane region" description="Helical; Name=Segment S3" evidence="1">
    <location>
        <begin position="251"/>
        <end position="271"/>
    </location>
</feature>
<feature type="topological domain" description="Extracellular" evidence="1">
    <location>
        <begin position="272"/>
        <end position="281"/>
    </location>
</feature>
<feature type="transmembrane region" description="Helical; Voltage-sensor; Name=Segment S4" evidence="1">
    <location>
        <begin position="282"/>
        <end position="302"/>
    </location>
</feature>
<feature type="topological domain" description="Cytoplasmic" evidence="1">
    <location>
        <begin position="303"/>
        <end position="317"/>
    </location>
</feature>
<feature type="transmembrane region" description="Helical; Name=Segment S5" evidence="1">
    <location>
        <begin position="318"/>
        <end position="339"/>
    </location>
</feature>
<feature type="topological domain" description="Extracellular" evidence="1">
    <location>
        <begin position="340"/>
        <end position="357"/>
    </location>
</feature>
<feature type="intramembrane region" description="Helical; Name=Pore helix" evidence="1">
    <location>
        <begin position="358"/>
        <end position="369"/>
    </location>
</feature>
<feature type="intramembrane region" evidence="1">
    <location>
        <begin position="370"/>
        <end position="377"/>
    </location>
</feature>
<feature type="topological domain" description="Extracellular" evidence="1">
    <location>
        <begin position="378"/>
        <end position="384"/>
    </location>
</feature>
<feature type="transmembrane region" description="Helical; Name=Segment S6" evidence="1">
    <location>
        <begin position="385"/>
        <end position="413"/>
    </location>
</feature>
<feature type="topological domain" description="Cytoplasmic" evidence="1">
    <location>
        <begin position="414"/>
        <end position="433"/>
    </location>
</feature>
<feature type="short sequence motif" description="Selectivity filter" evidence="1">
    <location>
        <begin position="370"/>
        <end position="375"/>
    </location>
</feature>
<feature type="splice variant" id="VSP_001027" description="In isoform 2." evidence="3">
    <location>
        <begin position="209"/>
        <end position="219"/>
    </location>
</feature>
<sequence length="433" mass="49247">MTFGRGGAASVVLNVGGARYSLSRELLKDFPLRRVSRLHGCRSERDVLEVCDDYDRERNEYFFDRHSEAFGFILLYVRGHGKLRFAPRMCELSFYNEMIYWGLEGAHLEYCCQRRLDDRMSDTHTFHAADELGREQPRPAGPEAAPSRRWLERMRRTFEEPTSSLAAQILASVSVVFVIVSMVVLCASTLPDWRAAVADNRSLDDRSRYSASPGREPSGIIEAICIGWFTAECIVRFIVSKNKCEFVKRPLNIIDLLAITPYYISVLMTVFTGENSQLQRAGVTLRVLRMMRIFWVIKLARHFIGLQTLGLTLKRCYREMAMLLVFICVAMAIFSALSQLLEHGLDLETSNKDFASIPAACWWVIISMTTVGYGDMYPITVPGRILGGVCVVSGIVLLALPITFIYHSFVQCYHELKFRSARYSRSLSAEFLN</sequence>
<protein>
    <recommendedName>
        <fullName evidence="4">Voltage-gated potassium channel regulatory subunit KCNG3</fullName>
    </recommendedName>
    <alternativeName>
        <fullName>Potassium voltage-gated channel subfamily G member 3</fullName>
    </alternativeName>
    <alternativeName>
        <fullName evidence="5">Voltage-gated potassium channel subunit Kv10.1</fullName>
    </alternativeName>
    <alternativeName>
        <fullName evidence="2">Voltage-gated potassium channel subunit Kv6.3</fullName>
    </alternativeName>
</protein>
<accession>P59053</accession>
<reference key="1">
    <citation type="submission" date="2001-12" db="EMBL/GenBank/DDBJ databases">
        <title>Kv10.1a and Kv10.1b: two novel alternatively spliced potassium channel subunits.</title>
        <authorList>
            <person name="Vega-Saenz de Miera E.C."/>
            <person name="Rudy B."/>
        </authorList>
    </citation>
    <scope>NUCLEOTIDE SEQUENCE [MRNA] (ISOFORMS 1 AND 2)</scope>
</reference>
<keyword id="KW-0025">Alternative splicing</keyword>
<keyword id="KW-1003">Cell membrane</keyword>
<keyword id="KW-0963">Cytoplasm</keyword>
<keyword id="KW-0407">Ion channel</keyword>
<keyword id="KW-0406">Ion transport</keyword>
<keyword id="KW-0472">Membrane</keyword>
<keyword id="KW-0630">Potassium</keyword>
<keyword id="KW-0631">Potassium channel</keyword>
<keyword id="KW-0633">Potassium transport</keyword>
<keyword id="KW-1185">Reference proteome</keyword>
<keyword id="KW-0812">Transmembrane</keyword>
<keyword id="KW-1133">Transmembrane helix</keyword>
<keyword id="KW-0813">Transport</keyword>
<keyword id="KW-0851">Voltage-gated channel</keyword>
<gene>
    <name evidence="6" type="primary">Kcng3</name>
</gene>
<organism>
    <name type="scientific">Mus musculus</name>
    <name type="common">Mouse</name>
    <dbReference type="NCBI Taxonomy" id="10090"/>
    <lineage>
        <taxon>Eukaryota</taxon>
        <taxon>Metazoa</taxon>
        <taxon>Chordata</taxon>
        <taxon>Craniata</taxon>
        <taxon>Vertebrata</taxon>
        <taxon>Euteleostomi</taxon>
        <taxon>Mammalia</taxon>
        <taxon>Eutheria</taxon>
        <taxon>Euarchontoglires</taxon>
        <taxon>Glires</taxon>
        <taxon>Rodentia</taxon>
        <taxon>Myomorpha</taxon>
        <taxon>Muroidea</taxon>
        <taxon>Muridae</taxon>
        <taxon>Murinae</taxon>
        <taxon>Mus</taxon>
        <taxon>Mus</taxon>
    </lineage>
</organism>
<proteinExistence type="evidence at transcript level"/>
<name>KCNG3_MOUSE</name>
<dbReference type="EMBL" id="AF454551">
    <property type="protein sequence ID" value="AAM93552.1"/>
    <property type="molecule type" value="mRNA"/>
</dbReference>
<dbReference type="EMBL" id="AF454552">
    <property type="protein sequence ID" value="AAM93553.1"/>
    <property type="molecule type" value="mRNA"/>
</dbReference>
<dbReference type="CCDS" id="CCDS28996.1">
    <molecule id="P59053-1"/>
</dbReference>
<dbReference type="RefSeq" id="NP_705732.1">
    <molecule id="P59053-1"/>
    <property type="nucleotide sequence ID" value="NM_153512.1"/>
</dbReference>
<dbReference type="RefSeq" id="XP_006524263.1">
    <molecule id="P59053-2"/>
    <property type="nucleotide sequence ID" value="XM_006524200.5"/>
</dbReference>
<dbReference type="SMR" id="P59053"/>
<dbReference type="FunCoup" id="P59053">
    <property type="interactions" value="62"/>
</dbReference>
<dbReference type="STRING" id="10090.ENSMUSP00000054910"/>
<dbReference type="GlyGen" id="P59053">
    <property type="glycosylation" value="1 site"/>
</dbReference>
<dbReference type="iPTMnet" id="P59053"/>
<dbReference type="PhosphoSitePlus" id="P59053"/>
<dbReference type="PaxDb" id="10090-ENSMUSP00000054910"/>
<dbReference type="PeptideAtlas" id="P59053"/>
<dbReference type="Antibodypedia" id="29754">
    <property type="antibodies" value="152 antibodies from 23 providers"/>
</dbReference>
<dbReference type="DNASU" id="225030"/>
<dbReference type="Ensembl" id="ENSMUST00000051482.2">
    <molecule id="P59053-1"/>
    <property type="protein sequence ID" value="ENSMUSP00000054910.2"/>
    <property type="gene ID" value="ENSMUSG00000045053.3"/>
</dbReference>
<dbReference type="Ensembl" id="ENSMUST00000234613.2">
    <molecule id="P59053-2"/>
    <property type="protein sequence ID" value="ENSMUSP00000157121.2"/>
    <property type="gene ID" value="ENSMUSG00000045053.3"/>
</dbReference>
<dbReference type="GeneID" id="225030"/>
<dbReference type="KEGG" id="mmu:225030"/>
<dbReference type="UCSC" id="uc008dsd.1">
    <molecule id="P59053-1"/>
    <property type="organism name" value="mouse"/>
</dbReference>
<dbReference type="UCSC" id="uc008dse.1">
    <molecule id="P59053-2"/>
    <property type="organism name" value="mouse"/>
</dbReference>
<dbReference type="AGR" id="MGI:2663923"/>
<dbReference type="CTD" id="170850"/>
<dbReference type="MGI" id="MGI:2663923">
    <property type="gene designation" value="Kcng3"/>
</dbReference>
<dbReference type="VEuPathDB" id="HostDB:ENSMUSG00000045053"/>
<dbReference type="eggNOG" id="KOG3713">
    <property type="taxonomic scope" value="Eukaryota"/>
</dbReference>
<dbReference type="GeneTree" id="ENSGT00940000159658"/>
<dbReference type="HOGENOM" id="CLU_011722_4_1_1"/>
<dbReference type="InParanoid" id="P59053"/>
<dbReference type="OMA" id="FYNEMVY"/>
<dbReference type="OrthoDB" id="296522at2759"/>
<dbReference type="PhylomeDB" id="P59053"/>
<dbReference type="TreeFam" id="TF313103"/>
<dbReference type="Reactome" id="R-MMU-1296072">
    <property type="pathway name" value="Voltage gated Potassium channels"/>
</dbReference>
<dbReference type="BioGRID-ORCS" id="225030">
    <property type="hits" value="2 hits in 79 CRISPR screens"/>
</dbReference>
<dbReference type="ChiTaRS" id="Kcng3">
    <property type="organism name" value="mouse"/>
</dbReference>
<dbReference type="PRO" id="PR:P59053"/>
<dbReference type="Proteomes" id="UP000000589">
    <property type="component" value="Chromosome 17"/>
</dbReference>
<dbReference type="RNAct" id="P59053">
    <property type="molecule type" value="protein"/>
</dbReference>
<dbReference type="Bgee" id="ENSMUSG00000045053">
    <property type="expression patterns" value="Expressed in secondary oocyte and 31 other cell types or tissues"/>
</dbReference>
<dbReference type="GO" id="GO:0005783">
    <property type="term" value="C:endoplasmic reticulum"/>
    <property type="evidence" value="ECO:0007669"/>
    <property type="project" value="Ensembl"/>
</dbReference>
<dbReference type="GO" id="GO:0005886">
    <property type="term" value="C:plasma membrane"/>
    <property type="evidence" value="ECO:0000250"/>
    <property type="project" value="UniProtKB"/>
</dbReference>
<dbReference type="GO" id="GO:0008076">
    <property type="term" value="C:voltage-gated potassium channel complex"/>
    <property type="evidence" value="ECO:0000250"/>
    <property type="project" value="UniProtKB"/>
</dbReference>
<dbReference type="GO" id="GO:0015459">
    <property type="term" value="F:potassium channel regulator activity"/>
    <property type="evidence" value="ECO:0000250"/>
    <property type="project" value="UniProtKB"/>
</dbReference>
<dbReference type="GO" id="GO:0005249">
    <property type="term" value="F:voltage-gated potassium channel activity"/>
    <property type="evidence" value="ECO:0007669"/>
    <property type="project" value="InterPro"/>
</dbReference>
<dbReference type="GO" id="GO:0051260">
    <property type="term" value="P:protein homooligomerization"/>
    <property type="evidence" value="ECO:0007669"/>
    <property type="project" value="InterPro"/>
</dbReference>
<dbReference type="GO" id="GO:1901379">
    <property type="term" value="P:regulation of potassium ion transmembrane transport"/>
    <property type="evidence" value="ECO:0000250"/>
    <property type="project" value="UniProtKB"/>
</dbReference>
<dbReference type="GO" id="GO:0043266">
    <property type="term" value="P:regulation of potassium ion transport"/>
    <property type="evidence" value="ECO:0000250"/>
    <property type="project" value="UniProtKB"/>
</dbReference>
<dbReference type="CDD" id="cd18422">
    <property type="entry name" value="BTB_POZ_KCNG3"/>
    <property type="match status" value="1"/>
</dbReference>
<dbReference type="FunFam" id="1.20.120.350:FF:000048">
    <property type="entry name" value="Potassium voltage-gated channel modifier subfamily G member 3"/>
    <property type="match status" value="1"/>
</dbReference>
<dbReference type="FunFam" id="3.30.710.10:FF:000060">
    <property type="entry name" value="Potassium voltage-gated channel modifier subfamily G member 3"/>
    <property type="match status" value="1"/>
</dbReference>
<dbReference type="FunFam" id="1.10.287.70:FF:000005">
    <property type="entry name" value="potassium voltage-gated channel subfamily G member 1"/>
    <property type="match status" value="1"/>
</dbReference>
<dbReference type="Gene3D" id="1.10.287.70">
    <property type="match status" value="1"/>
</dbReference>
<dbReference type="Gene3D" id="3.30.710.10">
    <property type="entry name" value="Potassium Channel Kv1.1, Chain A"/>
    <property type="match status" value="1"/>
</dbReference>
<dbReference type="Gene3D" id="1.20.120.350">
    <property type="entry name" value="Voltage-gated potassium channels. Chain C"/>
    <property type="match status" value="1"/>
</dbReference>
<dbReference type="InterPro" id="IPR000210">
    <property type="entry name" value="BTB/POZ_dom"/>
</dbReference>
<dbReference type="InterPro" id="IPR005821">
    <property type="entry name" value="Ion_trans_dom"/>
</dbReference>
<dbReference type="InterPro" id="IPR003968">
    <property type="entry name" value="K_chnl_volt-dep_Kv"/>
</dbReference>
<dbReference type="InterPro" id="IPR003971">
    <property type="entry name" value="K_chnl_volt-dep_Kv5/Kv9"/>
</dbReference>
<dbReference type="InterPro" id="IPR011333">
    <property type="entry name" value="SKP1/BTB/POZ_sf"/>
</dbReference>
<dbReference type="InterPro" id="IPR003131">
    <property type="entry name" value="T1-type_BTB"/>
</dbReference>
<dbReference type="InterPro" id="IPR028325">
    <property type="entry name" value="VG_K_chnl"/>
</dbReference>
<dbReference type="InterPro" id="IPR027359">
    <property type="entry name" value="Volt_channel_dom_sf"/>
</dbReference>
<dbReference type="PANTHER" id="PTHR11537:SF91">
    <property type="entry name" value="POTASSIUM VOLTAGE-GATED CHANNEL SUBFAMILY G MEMBER 3"/>
    <property type="match status" value="1"/>
</dbReference>
<dbReference type="PANTHER" id="PTHR11537">
    <property type="entry name" value="VOLTAGE-GATED POTASSIUM CHANNEL"/>
    <property type="match status" value="1"/>
</dbReference>
<dbReference type="Pfam" id="PF02214">
    <property type="entry name" value="BTB_2"/>
    <property type="match status" value="1"/>
</dbReference>
<dbReference type="Pfam" id="PF00520">
    <property type="entry name" value="Ion_trans"/>
    <property type="match status" value="1"/>
</dbReference>
<dbReference type="PRINTS" id="PR00169">
    <property type="entry name" value="KCHANNEL"/>
</dbReference>
<dbReference type="PRINTS" id="PR01494">
    <property type="entry name" value="KV9CHANNEL"/>
</dbReference>
<dbReference type="PRINTS" id="PR01491">
    <property type="entry name" value="KVCHANNEL"/>
</dbReference>
<dbReference type="SMART" id="SM00225">
    <property type="entry name" value="BTB"/>
    <property type="match status" value="1"/>
</dbReference>
<dbReference type="SUPFAM" id="SSF54695">
    <property type="entry name" value="POZ domain"/>
    <property type="match status" value="1"/>
</dbReference>
<dbReference type="SUPFAM" id="SSF81324">
    <property type="entry name" value="Voltage-gated potassium channels"/>
    <property type="match status" value="1"/>
</dbReference>
<comment type="function">
    <text evidence="2">Regulatory subunit of the voltage-gated potassium (Kv) channel which, when coassembled with KCNB1, modulates the kinetics parameters of the heterotetrameric channel namely the inactivation and deactivation rate. Potassium channel subunit that does not form functional channels by itself. Reduces the deactivation rate. Moderately acceleratee activation.</text>
</comment>
<comment type="subunit">
    <text evidence="2">Heterotetramer with KCNB1. Does not form homomultimers.</text>
</comment>
<comment type="subcellular location">
    <subcellularLocation>
        <location evidence="2">Cell membrane</location>
        <topology evidence="2">Multi-pass membrane protein</topology>
    </subcellularLocation>
    <subcellularLocation>
        <location evidence="2">Cytoplasm</location>
    </subcellularLocation>
    <text evidence="2">Has to be associated with KCNB1 or possibly another partner to get inserted in the plasma membrane. Colocalizes with KCNB1 at the plasma membrane. Retains in the endoplasmic reticulum in the absence of KCNB1.</text>
</comment>
<comment type="alternative products">
    <event type="alternative splicing"/>
    <isoform>
        <id>P59053-1</id>
        <name>1</name>
        <name>Kv10.1b</name>
        <sequence type="displayed"/>
    </isoform>
    <isoform>
        <id>P59053-2</id>
        <name>2</name>
        <name>Kv10.1a</name>
        <sequence type="described" ref="VSP_001027"/>
    </isoform>
</comment>
<comment type="domain">
    <text evidence="1">The transmembrane segment S4 functions as a voltage-sensor and is characterized by a series of positively charged amino acids at every third position. Channel opening and closing is effected by a conformation change that affects the position and orientation of the voltage-sensor paddle formed by S3 and S4 within the membrane. A transmembrane electric field that is positive inside would push the positively charged S4 segment outwards, thereby opening the pore, while a field that is negative inside would pull the S4 segment inwards and close the pore. Changes in the position and orientation of S4 are then transmitted to the activation gate formed by the inner helix bundle via the S4-S5 linker region.</text>
</comment>
<comment type="similarity">
    <text evidence="4">Belongs to the potassium channel family. G (TC 1.A.1.2) subfamily. Kv6.3/KCNG3 sub-subfamily.</text>
</comment>